<comment type="function">
    <text evidence="1">Part of the ABC transporter complex PotABCD involved in spermidine/putrescine import. Responsible for energy coupling to the transport system.</text>
</comment>
<comment type="catalytic activity">
    <reaction evidence="1">
        <text>ATP + H2O + polyamine-[polyamine-binding protein]Side 1 = ADP + phosphate + polyamineSide 2 + [polyamine-binding protein]Side 1.</text>
        <dbReference type="EC" id="7.6.2.11"/>
    </reaction>
</comment>
<comment type="subunit">
    <text evidence="1">The complex is composed of two ATP-binding proteins (PotA), two transmembrane proteins (PotB and PotC) and a solute-binding protein (PotD).</text>
</comment>
<comment type="subcellular location">
    <subcellularLocation>
        <location evidence="1">Cell membrane</location>
        <topology evidence="1">Peripheral membrane protein</topology>
    </subcellularLocation>
</comment>
<comment type="similarity">
    <text evidence="1">Belongs to the ABC transporter superfamily. Spermidine/putrescine importer (TC 3.A.1.11.1) family.</text>
</comment>
<evidence type="ECO:0000255" key="1">
    <source>
        <dbReference type="HAMAP-Rule" id="MF_01726"/>
    </source>
</evidence>
<accession>Q2YX74</accession>
<keyword id="KW-0067">ATP-binding</keyword>
<keyword id="KW-1003">Cell membrane</keyword>
<keyword id="KW-0472">Membrane</keyword>
<keyword id="KW-0547">Nucleotide-binding</keyword>
<keyword id="KW-1278">Translocase</keyword>
<keyword id="KW-0813">Transport</keyword>
<sequence length="364" mass="41330">MEPLLSLKSVSKSYDDLNILDDIDIDIESGYFYTLLGPSGCGKTTILKLIAGFEYPDSGEVIYQNKPIGNLPPNKRKVNTVFQDYALFPHLNVYDNIAFGLKLKKLSKTEIDQKVTEALKLVKLSGYEKRNINEMSGGQKQRVAIARAIVNEPEILLLDESLSALDLKLRTEMQYELRELQSRLGITFIFVTHDQEEALALSDFLFVLKDGKIQQFGTPTDIYDEPVNRFVADFIGESNIVEGRMVRDYVVNIYGQDFECVDMGIPENKKVEVVIRPEDISLIKAEEGLFKATVDSMLFRGVHYEICCIDNKGYEWVIQTTKKAEVGSEVGLYFDPEAIHIMVPGETEEEFDKRIESYEEVDNA</sequence>
<protein>
    <recommendedName>
        <fullName evidence="1">Spermidine/putrescine import ATP-binding protein PotA</fullName>
        <ecNumber evidence="1">7.6.2.11</ecNumber>
    </recommendedName>
</protein>
<organism>
    <name type="scientific">Staphylococcus aureus (strain bovine RF122 / ET3-1)</name>
    <dbReference type="NCBI Taxonomy" id="273036"/>
    <lineage>
        <taxon>Bacteria</taxon>
        <taxon>Bacillati</taxon>
        <taxon>Bacillota</taxon>
        <taxon>Bacilli</taxon>
        <taxon>Bacillales</taxon>
        <taxon>Staphylococcaceae</taxon>
        <taxon>Staphylococcus</taxon>
    </lineage>
</organism>
<feature type="chain" id="PRO_0000286291" description="Spermidine/putrescine import ATP-binding protein PotA">
    <location>
        <begin position="1"/>
        <end position="364"/>
    </location>
</feature>
<feature type="domain" description="ABC transporter" evidence="1">
    <location>
        <begin position="5"/>
        <end position="235"/>
    </location>
</feature>
<feature type="binding site" evidence="1">
    <location>
        <begin position="37"/>
        <end position="44"/>
    </location>
    <ligand>
        <name>ATP</name>
        <dbReference type="ChEBI" id="CHEBI:30616"/>
    </ligand>
</feature>
<name>POTA_STAAB</name>
<reference key="1">
    <citation type="journal article" date="2007" name="PLoS ONE">
        <title>Molecular correlates of host specialization in Staphylococcus aureus.</title>
        <authorList>
            <person name="Herron-Olson L."/>
            <person name="Fitzgerald J.R."/>
            <person name="Musser J.M."/>
            <person name="Kapur V."/>
        </authorList>
    </citation>
    <scope>NUCLEOTIDE SEQUENCE [LARGE SCALE GENOMIC DNA]</scope>
    <source>
        <strain>bovine RF122 / ET3-1</strain>
    </source>
</reference>
<dbReference type="EC" id="7.6.2.11" evidence="1"/>
<dbReference type="EMBL" id="AJ938182">
    <property type="protein sequence ID" value="CAI80653.1"/>
    <property type="molecule type" value="Genomic_DNA"/>
</dbReference>
<dbReference type="RefSeq" id="WP_000433551.1">
    <property type="nucleotide sequence ID" value="NC_007622.1"/>
</dbReference>
<dbReference type="SMR" id="Q2YX74"/>
<dbReference type="KEGG" id="sab:SAB0965"/>
<dbReference type="HOGENOM" id="CLU_000604_1_1_9"/>
<dbReference type="GO" id="GO:0043190">
    <property type="term" value="C:ATP-binding cassette (ABC) transporter complex"/>
    <property type="evidence" value="ECO:0007669"/>
    <property type="project" value="InterPro"/>
</dbReference>
<dbReference type="GO" id="GO:0015417">
    <property type="term" value="F:ABC-type polyamine transporter activity"/>
    <property type="evidence" value="ECO:0007669"/>
    <property type="project" value="UniProtKB-EC"/>
</dbReference>
<dbReference type="GO" id="GO:0005524">
    <property type="term" value="F:ATP binding"/>
    <property type="evidence" value="ECO:0007669"/>
    <property type="project" value="UniProtKB-KW"/>
</dbReference>
<dbReference type="GO" id="GO:0016887">
    <property type="term" value="F:ATP hydrolysis activity"/>
    <property type="evidence" value="ECO:0007669"/>
    <property type="project" value="InterPro"/>
</dbReference>
<dbReference type="FunFam" id="3.40.50.300:FF:000133">
    <property type="entry name" value="Spermidine/putrescine import ATP-binding protein PotA"/>
    <property type="match status" value="1"/>
</dbReference>
<dbReference type="Gene3D" id="2.40.50.100">
    <property type="match status" value="1"/>
</dbReference>
<dbReference type="Gene3D" id="3.40.50.300">
    <property type="entry name" value="P-loop containing nucleotide triphosphate hydrolases"/>
    <property type="match status" value="1"/>
</dbReference>
<dbReference type="InterPro" id="IPR003593">
    <property type="entry name" value="AAA+_ATPase"/>
</dbReference>
<dbReference type="InterPro" id="IPR050093">
    <property type="entry name" value="ABC_SmlMolc_Importer"/>
</dbReference>
<dbReference type="InterPro" id="IPR003439">
    <property type="entry name" value="ABC_transporter-like_ATP-bd"/>
</dbReference>
<dbReference type="InterPro" id="IPR017871">
    <property type="entry name" value="ABC_transporter-like_CS"/>
</dbReference>
<dbReference type="InterPro" id="IPR008995">
    <property type="entry name" value="Mo/tungstate-bd_C_term_dom"/>
</dbReference>
<dbReference type="InterPro" id="IPR027417">
    <property type="entry name" value="P-loop_NTPase"/>
</dbReference>
<dbReference type="InterPro" id="IPR013611">
    <property type="entry name" value="Transp-assoc_OB_typ2"/>
</dbReference>
<dbReference type="PANTHER" id="PTHR42781">
    <property type="entry name" value="SPERMIDINE/PUTRESCINE IMPORT ATP-BINDING PROTEIN POTA"/>
    <property type="match status" value="1"/>
</dbReference>
<dbReference type="PANTHER" id="PTHR42781:SF4">
    <property type="entry name" value="SPERMIDINE_PUTRESCINE IMPORT ATP-BINDING PROTEIN POTA"/>
    <property type="match status" value="1"/>
</dbReference>
<dbReference type="Pfam" id="PF00005">
    <property type="entry name" value="ABC_tran"/>
    <property type="match status" value="1"/>
</dbReference>
<dbReference type="Pfam" id="PF08402">
    <property type="entry name" value="TOBE_2"/>
    <property type="match status" value="1"/>
</dbReference>
<dbReference type="SMART" id="SM00382">
    <property type="entry name" value="AAA"/>
    <property type="match status" value="1"/>
</dbReference>
<dbReference type="SUPFAM" id="SSF50331">
    <property type="entry name" value="MOP-like"/>
    <property type="match status" value="1"/>
</dbReference>
<dbReference type="SUPFAM" id="SSF52540">
    <property type="entry name" value="P-loop containing nucleoside triphosphate hydrolases"/>
    <property type="match status" value="1"/>
</dbReference>
<dbReference type="PROSITE" id="PS00211">
    <property type="entry name" value="ABC_TRANSPORTER_1"/>
    <property type="match status" value="1"/>
</dbReference>
<dbReference type="PROSITE" id="PS50893">
    <property type="entry name" value="ABC_TRANSPORTER_2"/>
    <property type="match status" value="1"/>
</dbReference>
<dbReference type="PROSITE" id="PS51305">
    <property type="entry name" value="POTA"/>
    <property type="match status" value="1"/>
</dbReference>
<gene>
    <name evidence="1" type="primary">potA</name>
    <name type="ordered locus">SAB0965</name>
</gene>
<proteinExistence type="inferred from homology"/>